<keyword id="KW-0028">Amino-acid biosynthesis</keyword>
<keyword id="KW-0057">Aromatic amino acid biosynthesis</keyword>
<keyword id="KW-0456">Lyase</keyword>
<keyword id="KW-0822">Tryptophan biosynthesis</keyword>
<proteinExistence type="inferred from homology"/>
<feature type="chain" id="PRO_1000018301" description="Tryptophan synthase alpha chain">
    <location>
        <begin position="1"/>
        <end position="239"/>
    </location>
</feature>
<feature type="active site" description="Proton acceptor" evidence="1">
    <location>
        <position position="34"/>
    </location>
</feature>
<feature type="active site" description="Proton acceptor" evidence="1">
    <location>
        <position position="45"/>
    </location>
</feature>
<gene>
    <name evidence="1" type="primary">trpA</name>
    <name type="ordered locus">Tpet_0788</name>
</gene>
<sequence length="239" mass="26712">MKGFIAYIPAGFPDLETTRKILIALNELGITGVEIGVPFSDPVADGPVIQLAHSVALRNGVTMKKILEMLGEISVDYDLYLMSYLNPIVNYPEGKEKLLDELKKLGVKGLIIPDLPLREVKNVNIAYPIVPFVAPNTKDEEIEFINSVQAPFVYYISRYGVTGEREDLPFADHIKRVKERIKLPLFVGFGISRHEQVEKVWEIADGAIVGSALVRIMEESPKDEIPKKVVEKVKELLGK</sequence>
<evidence type="ECO:0000255" key="1">
    <source>
        <dbReference type="HAMAP-Rule" id="MF_00131"/>
    </source>
</evidence>
<dbReference type="EC" id="4.2.1.20" evidence="1"/>
<dbReference type="EMBL" id="CP000702">
    <property type="protein sequence ID" value="ABQ46807.1"/>
    <property type="molecule type" value="Genomic_DNA"/>
</dbReference>
<dbReference type="RefSeq" id="WP_011943375.1">
    <property type="nucleotide sequence ID" value="NC_009486.1"/>
</dbReference>
<dbReference type="SMR" id="A5IKT4"/>
<dbReference type="STRING" id="390874.Tpet_0788"/>
<dbReference type="KEGG" id="tpt:Tpet_0788"/>
<dbReference type="eggNOG" id="COG0159">
    <property type="taxonomic scope" value="Bacteria"/>
</dbReference>
<dbReference type="HOGENOM" id="CLU_016734_0_0_0"/>
<dbReference type="UniPathway" id="UPA00035">
    <property type="reaction ID" value="UER00044"/>
</dbReference>
<dbReference type="Proteomes" id="UP000006558">
    <property type="component" value="Chromosome"/>
</dbReference>
<dbReference type="GO" id="GO:0005829">
    <property type="term" value="C:cytosol"/>
    <property type="evidence" value="ECO:0007669"/>
    <property type="project" value="TreeGrafter"/>
</dbReference>
<dbReference type="GO" id="GO:0004834">
    <property type="term" value="F:tryptophan synthase activity"/>
    <property type="evidence" value="ECO:0007669"/>
    <property type="project" value="UniProtKB-UniRule"/>
</dbReference>
<dbReference type="CDD" id="cd04724">
    <property type="entry name" value="Tryptophan_synthase_alpha"/>
    <property type="match status" value="1"/>
</dbReference>
<dbReference type="Gene3D" id="3.20.20.70">
    <property type="entry name" value="Aldolase class I"/>
    <property type="match status" value="1"/>
</dbReference>
<dbReference type="HAMAP" id="MF_00131">
    <property type="entry name" value="Trp_synth_alpha"/>
    <property type="match status" value="1"/>
</dbReference>
<dbReference type="InterPro" id="IPR013785">
    <property type="entry name" value="Aldolase_TIM"/>
</dbReference>
<dbReference type="InterPro" id="IPR011060">
    <property type="entry name" value="RibuloseP-bd_barrel"/>
</dbReference>
<dbReference type="InterPro" id="IPR018204">
    <property type="entry name" value="Trp_synthase_alpha_AS"/>
</dbReference>
<dbReference type="InterPro" id="IPR002028">
    <property type="entry name" value="Trp_synthase_suA"/>
</dbReference>
<dbReference type="NCBIfam" id="TIGR00262">
    <property type="entry name" value="trpA"/>
    <property type="match status" value="1"/>
</dbReference>
<dbReference type="PANTHER" id="PTHR43406:SF1">
    <property type="entry name" value="TRYPTOPHAN SYNTHASE ALPHA CHAIN, CHLOROPLASTIC"/>
    <property type="match status" value="1"/>
</dbReference>
<dbReference type="PANTHER" id="PTHR43406">
    <property type="entry name" value="TRYPTOPHAN SYNTHASE, ALPHA CHAIN"/>
    <property type="match status" value="1"/>
</dbReference>
<dbReference type="Pfam" id="PF00290">
    <property type="entry name" value="Trp_syntA"/>
    <property type="match status" value="1"/>
</dbReference>
<dbReference type="SUPFAM" id="SSF51366">
    <property type="entry name" value="Ribulose-phoshate binding barrel"/>
    <property type="match status" value="1"/>
</dbReference>
<dbReference type="PROSITE" id="PS00167">
    <property type="entry name" value="TRP_SYNTHASE_ALPHA"/>
    <property type="match status" value="1"/>
</dbReference>
<organism>
    <name type="scientific">Thermotoga petrophila (strain ATCC BAA-488 / DSM 13995 / JCM 10881 / RKU-1)</name>
    <dbReference type="NCBI Taxonomy" id="390874"/>
    <lineage>
        <taxon>Bacteria</taxon>
        <taxon>Thermotogati</taxon>
        <taxon>Thermotogota</taxon>
        <taxon>Thermotogae</taxon>
        <taxon>Thermotogales</taxon>
        <taxon>Thermotogaceae</taxon>
        <taxon>Thermotoga</taxon>
    </lineage>
</organism>
<comment type="function">
    <text evidence="1">The alpha subunit is responsible for the aldol cleavage of indoleglycerol phosphate to indole and glyceraldehyde 3-phosphate.</text>
</comment>
<comment type="catalytic activity">
    <reaction evidence="1">
        <text>(1S,2R)-1-C-(indol-3-yl)glycerol 3-phosphate + L-serine = D-glyceraldehyde 3-phosphate + L-tryptophan + H2O</text>
        <dbReference type="Rhea" id="RHEA:10532"/>
        <dbReference type="ChEBI" id="CHEBI:15377"/>
        <dbReference type="ChEBI" id="CHEBI:33384"/>
        <dbReference type="ChEBI" id="CHEBI:57912"/>
        <dbReference type="ChEBI" id="CHEBI:58866"/>
        <dbReference type="ChEBI" id="CHEBI:59776"/>
        <dbReference type="EC" id="4.2.1.20"/>
    </reaction>
</comment>
<comment type="pathway">
    <text evidence="1">Amino-acid biosynthesis; L-tryptophan biosynthesis; L-tryptophan from chorismate: step 5/5.</text>
</comment>
<comment type="subunit">
    <text evidence="1">Tetramer of two alpha and two beta chains.</text>
</comment>
<comment type="similarity">
    <text evidence="1">Belongs to the TrpA family.</text>
</comment>
<protein>
    <recommendedName>
        <fullName evidence="1">Tryptophan synthase alpha chain</fullName>
        <ecNumber evidence="1">4.2.1.20</ecNumber>
    </recommendedName>
</protein>
<reference key="1">
    <citation type="submission" date="2007-05" db="EMBL/GenBank/DDBJ databases">
        <title>Complete sequence of Thermotoga petrophila RKU-1.</title>
        <authorList>
            <consortium name="US DOE Joint Genome Institute"/>
            <person name="Copeland A."/>
            <person name="Lucas S."/>
            <person name="Lapidus A."/>
            <person name="Barry K."/>
            <person name="Glavina del Rio T."/>
            <person name="Dalin E."/>
            <person name="Tice H."/>
            <person name="Pitluck S."/>
            <person name="Sims D."/>
            <person name="Brettin T."/>
            <person name="Bruce D."/>
            <person name="Detter J.C."/>
            <person name="Han C."/>
            <person name="Tapia R."/>
            <person name="Schmutz J."/>
            <person name="Larimer F."/>
            <person name="Land M."/>
            <person name="Hauser L."/>
            <person name="Kyrpides N."/>
            <person name="Mikhailova N."/>
            <person name="Nelson K."/>
            <person name="Gogarten J.P."/>
            <person name="Noll K."/>
            <person name="Richardson P."/>
        </authorList>
    </citation>
    <scope>NUCLEOTIDE SEQUENCE [LARGE SCALE GENOMIC DNA]</scope>
    <source>
        <strain>ATCC BAA-488 / DSM 13995 / JCM 10881 / RKU-1</strain>
    </source>
</reference>
<accession>A5IKT4</accession>
<name>TRPA_THEP1</name>